<keyword id="KW-1005">Bacterial flagellum biogenesis</keyword>
<keyword id="KW-0143">Chaperone</keyword>
<keyword id="KW-0963">Cytoplasm</keyword>
<keyword id="KW-0810">Translation regulation</keyword>
<organism>
    <name type="scientific">Helicobacter acinonychis (strain Sheeba)</name>
    <dbReference type="NCBI Taxonomy" id="382638"/>
    <lineage>
        <taxon>Bacteria</taxon>
        <taxon>Pseudomonadati</taxon>
        <taxon>Campylobacterota</taxon>
        <taxon>Epsilonproteobacteria</taxon>
        <taxon>Campylobacterales</taxon>
        <taxon>Helicobacteraceae</taxon>
        <taxon>Helicobacter</taxon>
    </lineage>
</organism>
<evidence type="ECO:0000255" key="1">
    <source>
        <dbReference type="HAMAP-Rule" id="MF_01185"/>
    </source>
</evidence>
<protein>
    <recommendedName>
        <fullName evidence="1">Flagellar assembly factor FliW 2</fullName>
    </recommendedName>
</protein>
<reference key="1">
    <citation type="journal article" date="2006" name="PLoS Genet.">
        <title>Who ate whom? Adaptive Helicobacter genomic changes that accompanied a host jump from early humans to large felines.</title>
        <authorList>
            <person name="Eppinger M."/>
            <person name="Baar C."/>
            <person name="Linz B."/>
            <person name="Raddatz G."/>
            <person name="Lanz C."/>
            <person name="Keller H."/>
            <person name="Morelli G."/>
            <person name="Gressmann H."/>
            <person name="Achtman M."/>
            <person name="Schuster S.C."/>
        </authorList>
    </citation>
    <scope>NUCLEOTIDE SEQUENCE [LARGE SCALE GENOMIC DNA]</scope>
    <source>
        <strain>Sheeba</strain>
    </source>
</reference>
<gene>
    <name evidence="1" type="primary">fliW2</name>
    <name type="ordered locus">Hac_1321</name>
</gene>
<dbReference type="EMBL" id="AM260522">
    <property type="protein sequence ID" value="CAK00060.1"/>
    <property type="molecule type" value="Genomic_DNA"/>
</dbReference>
<dbReference type="RefSeq" id="WP_011578150.1">
    <property type="nucleotide sequence ID" value="NC_008229.1"/>
</dbReference>
<dbReference type="SMR" id="Q17WB6"/>
<dbReference type="STRING" id="382638.Hac_1321"/>
<dbReference type="GeneID" id="31758642"/>
<dbReference type="KEGG" id="hac:Hac_1321"/>
<dbReference type="eggNOG" id="COG1699">
    <property type="taxonomic scope" value="Bacteria"/>
</dbReference>
<dbReference type="HOGENOM" id="CLU_112356_2_1_7"/>
<dbReference type="OrthoDB" id="5372942at2"/>
<dbReference type="BioCyc" id="HACI382638:HAC_RS05670-MONOMER"/>
<dbReference type="Proteomes" id="UP000000775">
    <property type="component" value="Chromosome"/>
</dbReference>
<dbReference type="GO" id="GO:0005737">
    <property type="term" value="C:cytoplasm"/>
    <property type="evidence" value="ECO:0007669"/>
    <property type="project" value="UniProtKB-SubCell"/>
</dbReference>
<dbReference type="GO" id="GO:0044780">
    <property type="term" value="P:bacterial-type flagellum assembly"/>
    <property type="evidence" value="ECO:0007669"/>
    <property type="project" value="UniProtKB-UniRule"/>
</dbReference>
<dbReference type="GO" id="GO:0006417">
    <property type="term" value="P:regulation of translation"/>
    <property type="evidence" value="ECO:0007669"/>
    <property type="project" value="UniProtKB-KW"/>
</dbReference>
<dbReference type="Gene3D" id="2.30.290.10">
    <property type="entry name" value="BH3618-like"/>
    <property type="match status" value="1"/>
</dbReference>
<dbReference type="HAMAP" id="MF_01185">
    <property type="entry name" value="FliW"/>
    <property type="match status" value="1"/>
</dbReference>
<dbReference type="InterPro" id="IPR003775">
    <property type="entry name" value="Flagellar_assembly_factor_FliW"/>
</dbReference>
<dbReference type="InterPro" id="IPR024046">
    <property type="entry name" value="Flagellar_assmbl_FliW_dom_sf"/>
</dbReference>
<dbReference type="NCBIfam" id="NF009791">
    <property type="entry name" value="PRK13283.1"/>
    <property type="match status" value="1"/>
</dbReference>
<dbReference type="PANTHER" id="PTHR39190">
    <property type="entry name" value="FLAGELLAR ASSEMBLY FACTOR FLIW"/>
    <property type="match status" value="1"/>
</dbReference>
<dbReference type="PANTHER" id="PTHR39190:SF1">
    <property type="entry name" value="FLAGELLAR ASSEMBLY FACTOR FLIW"/>
    <property type="match status" value="1"/>
</dbReference>
<dbReference type="Pfam" id="PF02623">
    <property type="entry name" value="FliW"/>
    <property type="match status" value="1"/>
</dbReference>
<dbReference type="SUPFAM" id="SSF141457">
    <property type="entry name" value="BH3618-like"/>
    <property type="match status" value="1"/>
</dbReference>
<feature type="chain" id="PRO_0000272992" description="Flagellar assembly factor FliW 2">
    <location>
        <begin position="1"/>
        <end position="135"/>
    </location>
</feature>
<proteinExistence type="inferred from homology"/>
<name>FLIW2_HELAH</name>
<accession>Q17WB6</accession>
<comment type="function">
    <text evidence="1">Acts as an anti-CsrA protein, binds CsrA and prevents it from repressing translation of its target genes, one of which is flagellin. Binds to flagellin and participates in the assembly of the flagellum.</text>
</comment>
<comment type="subunit">
    <text evidence="1">Interacts with translational regulator CsrA and flagellin(s).</text>
</comment>
<comment type="subcellular location">
    <subcellularLocation>
        <location evidence="1">Cytoplasm</location>
    </subcellularLocation>
</comment>
<comment type="similarity">
    <text evidence="1">Belongs to the FliW family.</text>
</comment>
<sequence>MNYFLKAPILGFEHISGVRLEKIDSLFSRLMGQTNSPMALDMVLVNPYCLREYSFVIPKYIELLLELDSHSKVEVYCVVVLQKNLEDSMVNFLAPLVFNSKNGFGAQVALSMMDYPDFGFRDPLKSFVIKERERA</sequence>